<protein>
    <recommendedName>
        <fullName evidence="1">Sulfate adenylyltransferase</fullName>
        <ecNumber evidence="1">2.7.7.4</ecNumber>
    </recommendedName>
    <alternativeName>
        <fullName evidence="1">ATP-sulfurylase</fullName>
    </alternativeName>
    <alternativeName>
        <fullName evidence="1">Sulfate adenylate transferase</fullName>
        <shortName evidence="1">SAT</shortName>
    </alternativeName>
</protein>
<proteinExistence type="inferred from homology"/>
<organism>
    <name type="scientific">Shouchella clausii (strain KSM-K16)</name>
    <name type="common">Alkalihalobacillus clausii</name>
    <dbReference type="NCBI Taxonomy" id="66692"/>
    <lineage>
        <taxon>Bacteria</taxon>
        <taxon>Bacillati</taxon>
        <taxon>Bacillota</taxon>
        <taxon>Bacilli</taxon>
        <taxon>Bacillales</taxon>
        <taxon>Bacillaceae</taxon>
        <taxon>Shouchella</taxon>
    </lineage>
</organism>
<dbReference type="EC" id="2.7.7.4" evidence="1"/>
<dbReference type="EMBL" id="AP006627">
    <property type="protein sequence ID" value="BAD63151.1"/>
    <property type="molecule type" value="Genomic_DNA"/>
</dbReference>
<dbReference type="RefSeq" id="WP_011245467.1">
    <property type="nucleotide sequence ID" value="NC_006582.1"/>
</dbReference>
<dbReference type="SMR" id="Q5WKF4"/>
<dbReference type="STRING" id="66692.ABC0612"/>
<dbReference type="KEGG" id="bcl:ABC0612"/>
<dbReference type="eggNOG" id="COG2046">
    <property type="taxonomic scope" value="Bacteria"/>
</dbReference>
<dbReference type="HOGENOM" id="CLU_022950_1_1_9"/>
<dbReference type="OrthoDB" id="9804504at2"/>
<dbReference type="UniPathway" id="UPA00140">
    <property type="reaction ID" value="UER00204"/>
</dbReference>
<dbReference type="Proteomes" id="UP000001168">
    <property type="component" value="Chromosome"/>
</dbReference>
<dbReference type="GO" id="GO:0005524">
    <property type="term" value="F:ATP binding"/>
    <property type="evidence" value="ECO:0007669"/>
    <property type="project" value="UniProtKB-KW"/>
</dbReference>
<dbReference type="GO" id="GO:0004781">
    <property type="term" value="F:sulfate adenylyltransferase (ATP) activity"/>
    <property type="evidence" value="ECO:0007669"/>
    <property type="project" value="UniProtKB-UniRule"/>
</dbReference>
<dbReference type="GO" id="GO:0070814">
    <property type="term" value="P:hydrogen sulfide biosynthetic process"/>
    <property type="evidence" value="ECO:0007669"/>
    <property type="project" value="UniProtKB-UniRule"/>
</dbReference>
<dbReference type="GO" id="GO:0000103">
    <property type="term" value="P:sulfate assimilation"/>
    <property type="evidence" value="ECO:0007669"/>
    <property type="project" value="UniProtKB-UniRule"/>
</dbReference>
<dbReference type="CDD" id="cd00517">
    <property type="entry name" value="ATPS"/>
    <property type="match status" value="1"/>
</dbReference>
<dbReference type="Gene3D" id="3.40.50.620">
    <property type="entry name" value="HUPs"/>
    <property type="match status" value="1"/>
</dbReference>
<dbReference type="Gene3D" id="3.10.400.10">
    <property type="entry name" value="Sulfate adenylyltransferase"/>
    <property type="match status" value="1"/>
</dbReference>
<dbReference type="HAMAP" id="MF_00066">
    <property type="entry name" value="Sulf_adenylyltr"/>
    <property type="match status" value="1"/>
</dbReference>
<dbReference type="InterPro" id="IPR025980">
    <property type="entry name" value="ATP-Sase_PUA-like_dom"/>
</dbReference>
<dbReference type="InterPro" id="IPR015947">
    <property type="entry name" value="PUA-like_sf"/>
</dbReference>
<dbReference type="InterPro" id="IPR014729">
    <property type="entry name" value="Rossmann-like_a/b/a_fold"/>
</dbReference>
<dbReference type="InterPro" id="IPR020792">
    <property type="entry name" value="SO4_adenylyltransferase_pro"/>
</dbReference>
<dbReference type="InterPro" id="IPR024951">
    <property type="entry name" value="Sulfurylase_cat_dom"/>
</dbReference>
<dbReference type="InterPro" id="IPR002650">
    <property type="entry name" value="Sulphate_adenylyltransferase"/>
</dbReference>
<dbReference type="NCBIfam" id="NF003166">
    <property type="entry name" value="PRK04149.1"/>
    <property type="match status" value="1"/>
</dbReference>
<dbReference type="NCBIfam" id="TIGR00339">
    <property type="entry name" value="sopT"/>
    <property type="match status" value="1"/>
</dbReference>
<dbReference type="PANTHER" id="PTHR43509">
    <property type="match status" value="1"/>
</dbReference>
<dbReference type="PANTHER" id="PTHR43509:SF1">
    <property type="entry name" value="SULFATE ADENYLYLTRANSFERASE"/>
    <property type="match status" value="1"/>
</dbReference>
<dbReference type="Pfam" id="PF01747">
    <property type="entry name" value="ATP-sulfurylase"/>
    <property type="match status" value="1"/>
</dbReference>
<dbReference type="Pfam" id="PF14306">
    <property type="entry name" value="PUA_2"/>
    <property type="match status" value="1"/>
</dbReference>
<dbReference type="SUPFAM" id="SSF52374">
    <property type="entry name" value="Nucleotidylyl transferase"/>
    <property type="match status" value="1"/>
</dbReference>
<dbReference type="SUPFAM" id="SSF88697">
    <property type="entry name" value="PUA domain-like"/>
    <property type="match status" value="1"/>
</dbReference>
<feature type="chain" id="PRO_1000075092" description="Sulfate adenylyltransferase">
    <location>
        <begin position="1"/>
        <end position="372"/>
    </location>
</feature>
<gene>
    <name evidence="1" type="primary">sat</name>
    <name type="ordered locus">ABC0612</name>
</gene>
<sequence length="372" mass="41893">MEAVKETELVHRYDPAYDTTGITNEIALDGFALSDLELLGIGGFTPLTGFLNEDDYHSVVKSMRLANGAPWSIPISLPVSADQASALRVGERAKLVYKNDIYGVIEIESIYTPDKKVEAQEVYRTTDEAHPGVAKMYARPPIYVGGPIVLTKRVNYERFASYYIDPIDTRRIFAEKGWKTVVGFQTRNPVHRAHEYIQKAALETVDGLFLNPLVGETKAGDIPADVRMESYEVLLKNYYPKNRVHLSVFPAAMRYAGPREAIFHALVRKNYGCTHFIVGRDHAGVGNYYGTYDAQEIFKEFEEGELGIKPLFFEHSFYCKACGNMASQKTCPHDSEHHVILSGTKVRQMLKEGVLPPQEFSRKEVVEVLMRG</sequence>
<keyword id="KW-0067">ATP-binding</keyword>
<keyword id="KW-0547">Nucleotide-binding</keyword>
<keyword id="KW-0548">Nucleotidyltransferase</keyword>
<keyword id="KW-1185">Reference proteome</keyword>
<keyword id="KW-0808">Transferase</keyword>
<accession>Q5WKF4</accession>
<evidence type="ECO:0000255" key="1">
    <source>
        <dbReference type="HAMAP-Rule" id="MF_00066"/>
    </source>
</evidence>
<reference key="1">
    <citation type="submission" date="2003-10" db="EMBL/GenBank/DDBJ databases">
        <title>The complete genome sequence of the alkaliphilic Bacillus clausii KSM-K16.</title>
        <authorList>
            <person name="Takaki Y."/>
            <person name="Kageyama Y."/>
            <person name="Shimamura S."/>
            <person name="Suzuki H."/>
            <person name="Nishi S."/>
            <person name="Hatada Y."/>
            <person name="Kawai S."/>
            <person name="Ito S."/>
            <person name="Horikoshi K."/>
        </authorList>
    </citation>
    <scope>NUCLEOTIDE SEQUENCE [LARGE SCALE GENOMIC DNA]</scope>
    <source>
        <strain>KSM-K16</strain>
    </source>
</reference>
<comment type="catalytic activity">
    <reaction evidence="1">
        <text>sulfate + ATP + H(+) = adenosine 5'-phosphosulfate + diphosphate</text>
        <dbReference type="Rhea" id="RHEA:18133"/>
        <dbReference type="ChEBI" id="CHEBI:15378"/>
        <dbReference type="ChEBI" id="CHEBI:16189"/>
        <dbReference type="ChEBI" id="CHEBI:30616"/>
        <dbReference type="ChEBI" id="CHEBI:33019"/>
        <dbReference type="ChEBI" id="CHEBI:58243"/>
        <dbReference type="EC" id="2.7.7.4"/>
    </reaction>
</comment>
<comment type="pathway">
    <text evidence="1">Sulfur metabolism; hydrogen sulfide biosynthesis; sulfite from sulfate: step 1/3.</text>
</comment>
<comment type="similarity">
    <text evidence="1">Belongs to the sulfate adenylyltransferase family.</text>
</comment>
<name>SAT_SHOC1</name>